<organismHost>
    <name type="scientific">Acanthamoeba polyphaga</name>
    <name type="common">Amoeba</name>
    <dbReference type="NCBI Taxonomy" id="5757"/>
</organismHost>
<feature type="chain" id="PRO_0000071357" description="Uncharacterized protein R802">
    <location>
        <begin position="1"/>
        <end position="247"/>
    </location>
</feature>
<name>YR802_MIMIV</name>
<accession>Q5UR60</accession>
<gene>
    <name type="ordered locus">MIMI_R802</name>
</gene>
<keyword id="KW-1185">Reference proteome</keyword>
<sequence>MEIPYITPAKLLSTNVLPLNGVKTAFVCFCPMPSVFSKYRLNVEVNTRLFLHVHNMHIMFGQYGATKFIVITEVYGGPVGVTIVEELKHYGIDKIIGIGFVGSFDPAIKTGSIVDAEKSLIEHGTTPHYLSADTKYTFPTLKIELPQLNVNKVCIWTTNALYREFKSDIIEAKNKQCSVVNMDTSHLYAACELLNVSCRYFAVVSDMLDLDGAENWSNDLTDAINHNDSDISVSMSSLIDHIIRQLN</sequence>
<reference key="1">
    <citation type="journal article" date="2004" name="Science">
        <title>The 1.2-megabase genome sequence of Mimivirus.</title>
        <authorList>
            <person name="Raoult D."/>
            <person name="Audic S."/>
            <person name="Robert C."/>
            <person name="Abergel C."/>
            <person name="Renesto P."/>
            <person name="Ogata H."/>
            <person name="La Scola B."/>
            <person name="Susan M."/>
            <person name="Claverie J.-M."/>
        </authorList>
    </citation>
    <scope>NUCLEOTIDE SEQUENCE [LARGE SCALE GENOMIC DNA]</scope>
    <source>
        <strain>Rowbotham-Bradford</strain>
    </source>
</reference>
<protein>
    <recommendedName>
        <fullName>Uncharacterized protein R802</fullName>
    </recommendedName>
</protein>
<organism>
    <name type="scientific">Acanthamoeba polyphaga mimivirus</name>
    <name type="common">APMV</name>
    <dbReference type="NCBI Taxonomy" id="212035"/>
    <lineage>
        <taxon>Viruses</taxon>
        <taxon>Varidnaviria</taxon>
        <taxon>Bamfordvirae</taxon>
        <taxon>Nucleocytoviricota</taxon>
        <taxon>Megaviricetes</taxon>
        <taxon>Imitervirales</taxon>
        <taxon>Mimiviridae</taxon>
        <taxon>Megamimivirinae</taxon>
        <taxon>Mimivirus</taxon>
        <taxon>Mimivirus bradfordmassiliense</taxon>
    </lineage>
</organism>
<dbReference type="EMBL" id="AY653733">
    <property type="protein sequence ID" value="AAV51062.1"/>
    <property type="molecule type" value="Genomic_DNA"/>
</dbReference>
<dbReference type="SMR" id="Q5UR60"/>
<dbReference type="KEGG" id="vg:9925464"/>
<dbReference type="OrthoDB" id="13462at10239"/>
<dbReference type="Proteomes" id="UP000001134">
    <property type="component" value="Genome"/>
</dbReference>
<dbReference type="GO" id="GO:0003824">
    <property type="term" value="F:catalytic activity"/>
    <property type="evidence" value="ECO:0007669"/>
    <property type="project" value="InterPro"/>
</dbReference>
<dbReference type="GO" id="GO:0009116">
    <property type="term" value="P:nucleoside metabolic process"/>
    <property type="evidence" value="ECO:0007669"/>
    <property type="project" value="InterPro"/>
</dbReference>
<dbReference type="Gene3D" id="3.40.50.1580">
    <property type="entry name" value="Nucleoside phosphorylase domain"/>
    <property type="match status" value="1"/>
</dbReference>
<dbReference type="InterPro" id="IPR000845">
    <property type="entry name" value="Nucleoside_phosphorylase_d"/>
</dbReference>
<dbReference type="InterPro" id="IPR035994">
    <property type="entry name" value="Nucleoside_phosphorylase_sf"/>
</dbReference>
<dbReference type="Pfam" id="PF01048">
    <property type="entry name" value="PNP_UDP_1"/>
    <property type="match status" value="1"/>
</dbReference>
<dbReference type="SUPFAM" id="SSF53167">
    <property type="entry name" value="Purine and uridine phosphorylases"/>
    <property type="match status" value="1"/>
</dbReference>
<proteinExistence type="predicted"/>